<sequence>MKVAVLGAAGGIGQALALLLKNQLPSGSELSLYDIAPVTPGVAVDLSHIPTAVKIKGFSGEDATPALEGADVVLISAGVARKPGMDRSDLFNVNAGIVKNLVQQIAKTCPKACVGIITNPVNTTVAIAAEVLKKAGVYDKNKLFGVTTLDIIRSNTFVAELKGKLPTEVEVPVIGGHSGVTILPLLSQIPGVSFTEQEAAELTKRIQNAGTEVVEAKAGGGSATLSMGQAAARFGLSLVRALQGEKGVVECAYVEGDGQYARFFSQPLLLGKNGVEERKSIGTLSAFEQHSLDAMLDTLKKDIQLGEDFINK</sequence>
<evidence type="ECO:0000255" key="1">
    <source>
        <dbReference type="HAMAP-Rule" id="MF_01516"/>
    </source>
</evidence>
<reference key="1">
    <citation type="journal article" date="2008" name="Genome Res.">
        <title>Comparative genome analysis of Salmonella enteritidis PT4 and Salmonella gallinarum 287/91 provides insights into evolutionary and host adaptation pathways.</title>
        <authorList>
            <person name="Thomson N.R."/>
            <person name="Clayton D.J."/>
            <person name="Windhorst D."/>
            <person name="Vernikos G."/>
            <person name="Davidson S."/>
            <person name="Churcher C."/>
            <person name="Quail M.A."/>
            <person name="Stevens M."/>
            <person name="Jones M.A."/>
            <person name="Watson M."/>
            <person name="Barron A."/>
            <person name="Layton A."/>
            <person name="Pickard D."/>
            <person name="Kingsley R.A."/>
            <person name="Bignell A."/>
            <person name="Clark L."/>
            <person name="Harris B."/>
            <person name="Ormond D."/>
            <person name="Abdellah Z."/>
            <person name="Brooks K."/>
            <person name="Cherevach I."/>
            <person name="Chillingworth T."/>
            <person name="Woodward J."/>
            <person name="Norberczak H."/>
            <person name="Lord A."/>
            <person name="Arrowsmith C."/>
            <person name="Jagels K."/>
            <person name="Moule S."/>
            <person name="Mungall K."/>
            <person name="Saunders M."/>
            <person name="Whitehead S."/>
            <person name="Chabalgoity J.A."/>
            <person name="Maskell D."/>
            <person name="Humphreys T."/>
            <person name="Roberts M."/>
            <person name="Barrow P.A."/>
            <person name="Dougan G."/>
            <person name="Parkhill J."/>
        </authorList>
    </citation>
    <scope>NUCLEOTIDE SEQUENCE [LARGE SCALE GENOMIC DNA]</scope>
    <source>
        <strain>P125109</strain>
    </source>
</reference>
<dbReference type="EC" id="1.1.1.37" evidence="1"/>
<dbReference type="EMBL" id="AM933172">
    <property type="protein sequence ID" value="CAR34768.1"/>
    <property type="molecule type" value="Genomic_DNA"/>
</dbReference>
<dbReference type="RefSeq" id="WP_000861586.1">
    <property type="nucleotide sequence ID" value="NC_011294.1"/>
</dbReference>
<dbReference type="SMR" id="B5R0N2"/>
<dbReference type="KEGG" id="set:SEN3192"/>
<dbReference type="HOGENOM" id="CLU_047181_1_0_6"/>
<dbReference type="Proteomes" id="UP000000613">
    <property type="component" value="Chromosome"/>
</dbReference>
<dbReference type="GO" id="GO:0005737">
    <property type="term" value="C:cytoplasm"/>
    <property type="evidence" value="ECO:0007669"/>
    <property type="project" value="TreeGrafter"/>
</dbReference>
<dbReference type="GO" id="GO:0030060">
    <property type="term" value="F:L-malate dehydrogenase (NAD+) activity"/>
    <property type="evidence" value="ECO:0007669"/>
    <property type="project" value="UniProtKB-UniRule"/>
</dbReference>
<dbReference type="GO" id="GO:0006108">
    <property type="term" value="P:malate metabolic process"/>
    <property type="evidence" value="ECO:0007669"/>
    <property type="project" value="InterPro"/>
</dbReference>
<dbReference type="GO" id="GO:0006099">
    <property type="term" value="P:tricarboxylic acid cycle"/>
    <property type="evidence" value="ECO:0007669"/>
    <property type="project" value="UniProtKB-UniRule"/>
</dbReference>
<dbReference type="CDD" id="cd01337">
    <property type="entry name" value="MDH_glyoxysomal_mitochondrial"/>
    <property type="match status" value="1"/>
</dbReference>
<dbReference type="FunFam" id="3.40.50.720:FF:000017">
    <property type="entry name" value="Malate dehydrogenase"/>
    <property type="match status" value="1"/>
</dbReference>
<dbReference type="FunFam" id="3.90.110.10:FF:000001">
    <property type="entry name" value="Malate dehydrogenase"/>
    <property type="match status" value="1"/>
</dbReference>
<dbReference type="Gene3D" id="3.90.110.10">
    <property type="entry name" value="Lactate dehydrogenase/glycoside hydrolase, family 4, C-terminal"/>
    <property type="match status" value="1"/>
</dbReference>
<dbReference type="Gene3D" id="3.40.50.720">
    <property type="entry name" value="NAD(P)-binding Rossmann-like Domain"/>
    <property type="match status" value="1"/>
</dbReference>
<dbReference type="HAMAP" id="MF_01516">
    <property type="entry name" value="Malate_dehydrog_1"/>
    <property type="match status" value="1"/>
</dbReference>
<dbReference type="InterPro" id="IPR001557">
    <property type="entry name" value="L-lactate/malate_DH"/>
</dbReference>
<dbReference type="InterPro" id="IPR022383">
    <property type="entry name" value="Lactate/malate_DH_C"/>
</dbReference>
<dbReference type="InterPro" id="IPR001236">
    <property type="entry name" value="Lactate/malate_DH_N"/>
</dbReference>
<dbReference type="InterPro" id="IPR015955">
    <property type="entry name" value="Lactate_DH/Glyco_Ohase_4_C"/>
</dbReference>
<dbReference type="InterPro" id="IPR001252">
    <property type="entry name" value="Malate_DH_AS"/>
</dbReference>
<dbReference type="InterPro" id="IPR010097">
    <property type="entry name" value="Malate_DH_type1"/>
</dbReference>
<dbReference type="InterPro" id="IPR023958">
    <property type="entry name" value="Malate_DH_type1_bac"/>
</dbReference>
<dbReference type="InterPro" id="IPR036291">
    <property type="entry name" value="NAD(P)-bd_dom_sf"/>
</dbReference>
<dbReference type="NCBIfam" id="TIGR01772">
    <property type="entry name" value="MDH_euk_gproteo"/>
    <property type="match status" value="1"/>
</dbReference>
<dbReference type="PANTHER" id="PTHR11540">
    <property type="entry name" value="MALATE AND LACTATE DEHYDROGENASE"/>
    <property type="match status" value="1"/>
</dbReference>
<dbReference type="PANTHER" id="PTHR11540:SF16">
    <property type="entry name" value="MALATE DEHYDROGENASE, MITOCHONDRIAL"/>
    <property type="match status" value="1"/>
</dbReference>
<dbReference type="Pfam" id="PF02866">
    <property type="entry name" value="Ldh_1_C"/>
    <property type="match status" value="1"/>
</dbReference>
<dbReference type="Pfam" id="PF00056">
    <property type="entry name" value="Ldh_1_N"/>
    <property type="match status" value="1"/>
</dbReference>
<dbReference type="PIRSF" id="PIRSF000102">
    <property type="entry name" value="Lac_mal_DH"/>
    <property type="match status" value="1"/>
</dbReference>
<dbReference type="SUPFAM" id="SSF56327">
    <property type="entry name" value="LDH C-terminal domain-like"/>
    <property type="match status" value="1"/>
</dbReference>
<dbReference type="SUPFAM" id="SSF51735">
    <property type="entry name" value="NAD(P)-binding Rossmann-fold domains"/>
    <property type="match status" value="1"/>
</dbReference>
<dbReference type="PROSITE" id="PS00068">
    <property type="entry name" value="MDH"/>
    <property type="match status" value="1"/>
</dbReference>
<keyword id="KW-0520">NAD</keyword>
<keyword id="KW-0560">Oxidoreductase</keyword>
<keyword id="KW-0816">Tricarboxylic acid cycle</keyword>
<proteinExistence type="inferred from homology"/>
<comment type="function">
    <text evidence="1">Catalyzes the reversible oxidation of malate to oxaloacetate.</text>
</comment>
<comment type="catalytic activity">
    <reaction evidence="1">
        <text>(S)-malate + NAD(+) = oxaloacetate + NADH + H(+)</text>
        <dbReference type="Rhea" id="RHEA:21432"/>
        <dbReference type="ChEBI" id="CHEBI:15378"/>
        <dbReference type="ChEBI" id="CHEBI:15589"/>
        <dbReference type="ChEBI" id="CHEBI:16452"/>
        <dbReference type="ChEBI" id="CHEBI:57540"/>
        <dbReference type="ChEBI" id="CHEBI:57945"/>
        <dbReference type="EC" id="1.1.1.37"/>
    </reaction>
</comment>
<comment type="subunit">
    <text evidence="1">Homodimer.</text>
</comment>
<comment type="similarity">
    <text evidence="1">Belongs to the LDH/MDH superfamily. MDH type 1 family.</text>
</comment>
<accession>B5R0N2</accession>
<protein>
    <recommendedName>
        <fullName evidence="1">Malate dehydrogenase</fullName>
        <ecNumber evidence="1">1.1.1.37</ecNumber>
    </recommendedName>
</protein>
<organism>
    <name type="scientific">Salmonella enteritidis PT4 (strain P125109)</name>
    <dbReference type="NCBI Taxonomy" id="550537"/>
    <lineage>
        <taxon>Bacteria</taxon>
        <taxon>Pseudomonadati</taxon>
        <taxon>Pseudomonadota</taxon>
        <taxon>Gammaproteobacteria</taxon>
        <taxon>Enterobacterales</taxon>
        <taxon>Enterobacteriaceae</taxon>
        <taxon>Salmonella</taxon>
    </lineage>
</organism>
<gene>
    <name evidence="1" type="primary">mdh</name>
    <name type="ordered locus">SEN3192</name>
</gene>
<feature type="chain" id="PRO_1000191591" description="Malate dehydrogenase">
    <location>
        <begin position="1"/>
        <end position="312"/>
    </location>
</feature>
<feature type="active site" description="Proton acceptor" evidence="1">
    <location>
        <position position="177"/>
    </location>
</feature>
<feature type="binding site" evidence="1">
    <location>
        <begin position="7"/>
        <end position="13"/>
    </location>
    <ligand>
        <name>NAD(+)</name>
        <dbReference type="ChEBI" id="CHEBI:57540"/>
    </ligand>
</feature>
<feature type="binding site" evidence="1">
    <location>
        <position position="34"/>
    </location>
    <ligand>
        <name>NAD(+)</name>
        <dbReference type="ChEBI" id="CHEBI:57540"/>
    </ligand>
</feature>
<feature type="binding site" evidence="1">
    <location>
        <position position="81"/>
    </location>
    <ligand>
        <name>substrate</name>
    </ligand>
</feature>
<feature type="binding site" evidence="1">
    <location>
        <position position="87"/>
    </location>
    <ligand>
        <name>substrate</name>
    </ligand>
</feature>
<feature type="binding site" evidence="1">
    <location>
        <position position="94"/>
    </location>
    <ligand>
        <name>NAD(+)</name>
        <dbReference type="ChEBI" id="CHEBI:57540"/>
    </ligand>
</feature>
<feature type="binding site" evidence="1">
    <location>
        <begin position="117"/>
        <end position="119"/>
    </location>
    <ligand>
        <name>NAD(+)</name>
        <dbReference type="ChEBI" id="CHEBI:57540"/>
    </ligand>
</feature>
<feature type="binding site" evidence="1">
    <location>
        <position position="119"/>
    </location>
    <ligand>
        <name>substrate</name>
    </ligand>
</feature>
<feature type="binding site" evidence="1">
    <location>
        <position position="153"/>
    </location>
    <ligand>
        <name>substrate</name>
    </ligand>
</feature>
<feature type="binding site" evidence="1">
    <location>
        <position position="227"/>
    </location>
    <ligand>
        <name>NAD(+)</name>
        <dbReference type="ChEBI" id="CHEBI:57540"/>
    </ligand>
</feature>
<name>MDH_SALEP</name>